<reference key="1">
    <citation type="journal article" date="2007" name="Nature">
        <title>Evolution of genes and genomes on the Drosophila phylogeny.</title>
        <authorList>
            <consortium name="Drosophila 12 genomes consortium"/>
        </authorList>
    </citation>
    <scope>NUCLEOTIDE SEQUENCE [LARGE SCALE GENOMIC DNA]</scope>
    <source>
        <strain>Rob3c / Tucson 14021-0248.25</strain>
    </source>
</reference>
<accession>B4I5P7</accession>
<dbReference type="EMBL" id="CH480822">
    <property type="protein sequence ID" value="EDW55703.1"/>
    <property type="molecule type" value="Genomic_DNA"/>
</dbReference>
<dbReference type="SMR" id="B4I5P7"/>
<dbReference type="STRING" id="7238.B4I5P7"/>
<dbReference type="EnsemblMetazoa" id="FBtr0200025">
    <property type="protein sequence ID" value="FBpp0198517"/>
    <property type="gene ID" value="FBgn0171952"/>
</dbReference>
<dbReference type="EnsemblMetazoa" id="XM_002039021.2">
    <property type="protein sequence ID" value="XP_002039057.1"/>
    <property type="gene ID" value="LOC6614630"/>
</dbReference>
<dbReference type="GeneID" id="6614630"/>
<dbReference type="KEGG" id="dse:6614630"/>
<dbReference type="CTD" id="35169"/>
<dbReference type="HOGENOM" id="CLU_011214_1_0_1"/>
<dbReference type="OMA" id="DAKYRKC"/>
<dbReference type="OrthoDB" id="37813at7215"/>
<dbReference type="PhylomeDB" id="B4I5P7"/>
<dbReference type="Proteomes" id="UP000001292">
    <property type="component" value="Unassembled WGS sequence"/>
</dbReference>
<dbReference type="GO" id="GO:0005813">
    <property type="term" value="C:centrosome"/>
    <property type="evidence" value="ECO:0007669"/>
    <property type="project" value="TreeGrafter"/>
</dbReference>
<dbReference type="GO" id="GO:0005768">
    <property type="term" value="C:endosome"/>
    <property type="evidence" value="ECO:0000250"/>
    <property type="project" value="UniProtKB"/>
</dbReference>
<dbReference type="GO" id="GO:0005874">
    <property type="term" value="C:microtubule"/>
    <property type="evidence" value="ECO:0007669"/>
    <property type="project" value="UniProtKB-KW"/>
</dbReference>
<dbReference type="GO" id="GO:0045202">
    <property type="term" value="C:synapse"/>
    <property type="evidence" value="ECO:0000250"/>
    <property type="project" value="UniProtKB"/>
</dbReference>
<dbReference type="GO" id="GO:0051959">
    <property type="term" value="F:dynein light intermediate chain binding"/>
    <property type="evidence" value="ECO:0007669"/>
    <property type="project" value="TreeGrafter"/>
</dbReference>
<dbReference type="GO" id="GO:0008017">
    <property type="term" value="F:microtubule binding"/>
    <property type="evidence" value="ECO:0000250"/>
    <property type="project" value="UniProtKB"/>
</dbReference>
<dbReference type="GO" id="GO:0031267">
    <property type="term" value="F:small GTPase binding"/>
    <property type="evidence" value="ECO:0007669"/>
    <property type="project" value="EnsemblMetazoa"/>
</dbReference>
<dbReference type="GO" id="GO:0031122">
    <property type="term" value="P:cytoplasmic microtubule organization"/>
    <property type="evidence" value="ECO:0007669"/>
    <property type="project" value="InterPro"/>
</dbReference>
<dbReference type="GO" id="GO:0030705">
    <property type="term" value="P:cytoskeleton-dependent intracellular transport"/>
    <property type="evidence" value="ECO:0000250"/>
    <property type="project" value="UniProtKB"/>
</dbReference>
<dbReference type="GO" id="GO:0008340">
    <property type="term" value="P:determination of adult lifespan"/>
    <property type="evidence" value="ECO:0000250"/>
    <property type="project" value="UniProtKB"/>
</dbReference>
<dbReference type="GO" id="GO:0006897">
    <property type="term" value="P:endocytosis"/>
    <property type="evidence" value="ECO:0000250"/>
    <property type="project" value="UniProtKB"/>
</dbReference>
<dbReference type="CDD" id="cd22222">
    <property type="entry name" value="HkD_Hook"/>
    <property type="match status" value="1"/>
</dbReference>
<dbReference type="FunFam" id="1.10.418.10:FF:000024">
    <property type="entry name" value="Hook homolog 3 (Drosophila)"/>
    <property type="match status" value="1"/>
</dbReference>
<dbReference type="Gene3D" id="1.10.418.10">
    <property type="entry name" value="Calponin-like domain"/>
    <property type="match status" value="1"/>
</dbReference>
<dbReference type="InterPro" id="IPR001715">
    <property type="entry name" value="CH_dom"/>
</dbReference>
<dbReference type="InterPro" id="IPR036872">
    <property type="entry name" value="CH_dom_sf"/>
</dbReference>
<dbReference type="InterPro" id="IPR008636">
    <property type="entry name" value="Hook_C"/>
</dbReference>
<dbReference type="InterPro" id="IPR043936">
    <property type="entry name" value="HOOK_N"/>
</dbReference>
<dbReference type="PANTHER" id="PTHR18947">
    <property type="entry name" value="HOOK PROTEINS"/>
    <property type="match status" value="1"/>
</dbReference>
<dbReference type="PANTHER" id="PTHR18947:SF39">
    <property type="entry name" value="PROTEIN HOOK"/>
    <property type="match status" value="1"/>
</dbReference>
<dbReference type="Pfam" id="PF05622">
    <property type="entry name" value="HOOK"/>
    <property type="match status" value="1"/>
</dbReference>
<dbReference type="Pfam" id="PF19047">
    <property type="entry name" value="HOOK_N"/>
    <property type="match status" value="1"/>
</dbReference>
<dbReference type="SUPFAM" id="SSF116907">
    <property type="entry name" value="Hook domain"/>
    <property type="match status" value="1"/>
</dbReference>
<dbReference type="PROSITE" id="PS50021">
    <property type="entry name" value="CH"/>
    <property type="match status" value="1"/>
</dbReference>
<organism>
    <name type="scientific">Drosophila sechellia</name>
    <name type="common">Fruit fly</name>
    <dbReference type="NCBI Taxonomy" id="7238"/>
    <lineage>
        <taxon>Eukaryota</taxon>
        <taxon>Metazoa</taxon>
        <taxon>Ecdysozoa</taxon>
        <taxon>Arthropoda</taxon>
        <taxon>Hexapoda</taxon>
        <taxon>Insecta</taxon>
        <taxon>Pterygota</taxon>
        <taxon>Neoptera</taxon>
        <taxon>Endopterygota</taxon>
        <taxon>Diptera</taxon>
        <taxon>Brachycera</taxon>
        <taxon>Muscomorpha</taxon>
        <taxon>Ephydroidea</taxon>
        <taxon>Drosophilidae</taxon>
        <taxon>Drosophila</taxon>
        <taxon>Sophophora</taxon>
    </lineage>
</organism>
<comment type="function">
    <text evidence="1">Involved in endocytic trafficking by stabilizing organelles of the endocytic pathway. Probably acts as a cytoskeletal linker protein required to tether endosome vesicles to the cytoskeleton. Involved in modulation of endocytosis at stages required for down-regulation of membrane proteins that control synapse size. Not involved in synaptic vesicle recycling. Required in R7 cells for boss endocytosis into multivesicular bodies (MVBs). Has a role in regulating adult longevity.</text>
</comment>
<comment type="subunit">
    <text evidence="1">Homodimer. Interacts with microtubules via its N-terminus.</text>
</comment>
<comment type="subcellular location">
    <subcellularLocation>
        <location evidence="1">Cytoplasm</location>
        <location evidence="1">Cytoskeleton</location>
    </subcellularLocation>
    <subcellularLocation>
        <location evidence="1">Endosome</location>
    </subcellularLocation>
    <subcellularLocation>
        <location evidence="1">Synapse</location>
    </subcellularLocation>
    <text evidence="1">Enriched at neuromuscular synapses, in both presynaptic and postsynaptic regions.</text>
</comment>
<comment type="domain">
    <text evidence="1">The coiled coil domain mediates homodimerization.</text>
</comment>
<comment type="similarity">
    <text evidence="4">Belongs to the hook family.</text>
</comment>
<gene>
    <name evidence="1" type="primary">hook</name>
    <name evidence="1" type="synonym">hk</name>
    <name type="ORF">GM17040</name>
</gene>
<name>HOOK_DROSE</name>
<keyword id="KW-0175">Coiled coil</keyword>
<keyword id="KW-0963">Cytoplasm</keyword>
<keyword id="KW-0206">Cytoskeleton</keyword>
<keyword id="KW-0217">Developmental protein</keyword>
<keyword id="KW-0254">Endocytosis</keyword>
<keyword id="KW-0967">Endosome</keyword>
<keyword id="KW-0493">Microtubule</keyword>
<keyword id="KW-1185">Reference proteome</keyword>
<keyword id="KW-0770">Synapse</keyword>
<sequence length="679" mass="76577">MSAPKNEMYYSLLEWFKTLNLNAPHADAESLADGVALAQALNQFAPESFTDAWLSKIKASAVGSNWRLRMSNLKKVTQSVYDYYSDVLNYSLSDFSKPDLQRIAEKCDLGELERLLQLVLGCAVNCAEKQSYITEIMCLEEELQANIMRALQELEATRQASTPEGGVASSLSRGSRTGLLDSKAVQEDRDALAQKCFETEKKMLLLIDEKTNLQQELHKLQQEFARLEQHSTVIGDDGVSLGPVQTGSVRYNELRRQLDLLKEELLQSEGAREDLKIKAQQQDTDLLHMQMRIEELMKSSAEVTTLKDEVDVLRESNDKLKICEAQLDTYKKKLEDYNDLKKQVKILEERSADYVQQNAQFEEDAKRYANTKGQVELFKKEIQDLHAKLDAESSKNVKLEFDNKNLEGKNLALQRAKDSLLKERDNLREAVDELKCGQLSSNTALTGTTVSRELQPSATVEKLQRLEAENKALREGQGGQTALAQLLDDANKRCENLREQLKTANERILSLSHASQSDDPILKESEFGKQIKQLMELNEQKTLQLEEAVTQSTSLQCKVTQLETNLSAREQEILVYDAKYRKCVEKAKEVIKSIDPRIASALDASVLEKSADLVEAEPKPKMSVMEEQLMTSAFYRLGVNAQRDAIDSKLAILMGSGQTFLARQRQSAPRKSLSAMKSK</sequence>
<proteinExistence type="inferred from homology"/>
<protein>
    <recommendedName>
        <fullName>Protein hook</fullName>
    </recommendedName>
</protein>
<evidence type="ECO:0000250" key="1">
    <source>
        <dbReference type="UniProtKB" id="Q24185"/>
    </source>
</evidence>
<evidence type="ECO:0000255" key="2"/>
<evidence type="ECO:0000255" key="3">
    <source>
        <dbReference type="PROSITE-ProRule" id="PRU00044"/>
    </source>
</evidence>
<evidence type="ECO:0000305" key="4"/>
<feature type="chain" id="PRO_0000379068" description="Protein hook">
    <location>
        <begin position="1"/>
        <end position="679"/>
    </location>
</feature>
<feature type="domain" description="Calponin-homology (CH)" evidence="3">
    <location>
        <begin position="6"/>
        <end position="123"/>
    </location>
</feature>
<feature type="coiled-coil region" evidence="2">
    <location>
        <begin position="135"/>
        <end position="437"/>
    </location>
</feature>
<feature type="coiled-coil region" evidence="2">
    <location>
        <begin position="480"/>
        <end position="574"/>
    </location>
</feature>